<protein>
    <recommendedName>
        <fullName>Retinochrome</fullName>
    </recommendedName>
    <alternativeName>
        <fullName>Retinal photoisomerase</fullName>
    </alternativeName>
</protein>
<name>REIS_TODPA</name>
<keyword id="KW-0157">Chromophore</keyword>
<keyword id="KW-0903">Direct protein sequencing</keyword>
<keyword id="KW-0297">G-protein coupled receptor</keyword>
<keyword id="KW-0325">Glycoprotein</keyword>
<keyword id="KW-0472">Membrane</keyword>
<keyword id="KW-0600">Photoreceptor protein</keyword>
<keyword id="KW-0675">Receptor</keyword>
<keyword id="KW-0681">Retinal protein</keyword>
<keyword id="KW-0716">Sensory transduction</keyword>
<keyword id="KW-0807">Transducer</keyword>
<keyword id="KW-0812">Transmembrane</keyword>
<keyword id="KW-1133">Transmembrane helix</keyword>
<keyword id="KW-0844">Vision</keyword>
<evidence type="ECO:0000255" key="1"/>
<evidence type="ECO:0000255" key="2">
    <source>
        <dbReference type="PROSITE-ProRule" id="PRU00521"/>
    </source>
</evidence>
<evidence type="ECO:0000269" key="3">
    <source>
    </source>
</evidence>
<proteinExistence type="evidence at protein level"/>
<dbReference type="EMBL" id="X57143">
    <property type="protein sequence ID" value="CAA40422.1"/>
    <property type="molecule type" value="mRNA"/>
</dbReference>
<dbReference type="PIR" id="S12864">
    <property type="entry name" value="S12864"/>
</dbReference>
<dbReference type="SMR" id="P23820"/>
<dbReference type="BioCyc" id="MetaCyc:MONOMER-17359"/>
<dbReference type="GO" id="GO:0016020">
    <property type="term" value="C:membrane"/>
    <property type="evidence" value="ECO:0007669"/>
    <property type="project" value="UniProtKB-SubCell"/>
</dbReference>
<dbReference type="GO" id="GO:0004930">
    <property type="term" value="F:G protein-coupled receptor activity"/>
    <property type="evidence" value="ECO:0007669"/>
    <property type="project" value="UniProtKB-KW"/>
</dbReference>
<dbReference type="GO" id="GO:0009881">
    <property type="term" value="F:photoreceptor activity"/>
    <property type="evidence" value="ECO:0007669"/>
    <property type="project" value="UniProtKB-KW"/>
</dbReference>
<dbReference type="GO" id="GO:0007602">
    <property type="term" value="P:phototransduction"/>
    <property type="evidence" value="ECO:0007669"/>
    <property type="project" value="UniProtKB-KW"/>
</dbReference>
<dbReference type="GO" id="GO:0007601">
    <property type="term" value="P:visual perception"/>
    <property type="evidence" value="ECO:0007669"/>
    <property type="project" value="UniProtKB-KW"/>
</dbReference>
<dbReference type="Gene3D" id="1.20.1070.10">
    <property type="entry name" value="Rhodopsin 7-helix transmembrane proteins"/>
    <property type="match status" value="1"/>
</dbReference>
<dbReference type="InterPro" id="IPR050125">
    <property type="entry name" value="GPCR_opsins"/>
</dbReference>
<dbReference type="InterPro" id="IPR000276">
    <property type="entry name" value="GPCR_Rhodpsn"/>
</dbReference>
<dbReference type="InterPro" id="IPR017452">
    <property type="entry name" value="GPCR_Rhodpsn_7TM"/>
</dbReference>
<dbReference type="InterPro" id="IPR027430">
    <property type="entry name" value="Retinal_BS"/>
</dbReference>
<dbReference type="PANTHER" id="PTHR24240">
    <property type="entry name" value="OPSIN"/>
    <property type="match status" value="1"/>
</dbReference>
<dbReference type="Pfam" id="PF00001">
    <property type="entry name" value="7tm_1"/>
    <property type="match status" value="1"/>
</dbReference>
<dbReference type="SUPFAM" id="SSF81321">
    <property type="entry name" value="Family A G protein-coupled receptor-like"/>
    <property type="match status" value="1"/>
</dbReference>
<dbReference type="PROSITE" id="PS50262">
    <property type="entry name" value="G_PROTEIN_RECEP_F1_2"/>
    <property type="match status" value="1"/>
</dbReference>
<dbReference type="PROSITE" id="PS00238">
    <property type="entry name" value="OPSIN"/>
    <property type="match status" value="1"/>
</dbReference>
<organism>
    <name type="scientific">Todarodes pacificus</name>
    <name type="common">Japanese flying squid</name>
    <name type="synonym">Ommastrephes pacificus</name>
    <dbReference type="NCBI Taxonomy" id="6637"/>
    <lineage>
        <taxon>Eukaryota</taxon>
        <taxon>Metazoa</taxon>
        <taxon>Spiralia</taxon>
        <taxon>Lophotrochozoa</taxon>
        <taxon>Mollusca</taxon>
        <taxon>Cephalopoda</taxon>
        <taxon>Coleoidea</taxon>
        <taxon>Decapodiformes</taxon>
        <taxon>Oegopsida</taxon>
        <taxon>Ommastrephidae</taxon>
        <taxon>Todarodes</taxon>
    </lineage>
</organism>
<feature type="chain" id="PRO_0000197812" description="Retinochrome">
    <location>
        <begin position="1"/>
        <end position="301"/>
    </location>
</feature>
<feature type="topological domain" description="Extracellular" evidence="1">
    <location>
        <begin position="1"/>
        <end position="17"/>
    </location>
</feature>
<feature type="transmembrane region" description="Helical; Name=1" evidence="1">
    <location>
        <begin position="18"/>
        <end position="43"/>
    </location>
</feature>
<feature type="topological domain" description="Cytoplasmic" evidence="1">
    <location>
        <begin position="44"/>
        <end position="54"/>
    </location>
</feature>
<feature type="transmembrane region" description="Helical; Name=2" evidence="1">
    <location>
        <begin position="55"/>
        <end position="76"/>
    </location>
</feature>
<feature type="topological domain" description="Extracellular" evidence="1">
    <location>
        <begin position="77"/>
        <end position="94"/>
    </location>
</feature>
<feature type="transmembrane region" description="Helical; Name=3" evidence="1">
    <location>
        <begin position="95"/>
        <end position="120"/>
    </location>
</feature>
<feature type="topological domain" description="Cytoplasmic" evidence="1">
    <location>
        <begin position="121"/>
        <end position="132"/>
    </location>
</feature>
<feature type="transmembrane region" description="Helical; Name=4" evidence="1">
    <location>
        <begin position="133"/>
        <end position="153"/>
    </location>
</feature>
<feature type="topological domain" description="Extracellular" evidence="1">
    <location>
        <begin position="154"/>
        <end position="180"/>
    </location>
</feature>
<feature type="transmembrane region" description="Helical; Name=5" evidence="1">
    <location>
        <begin position="181"/>
        <end position="208"/>
    </location>
</feature>
<feature type="topological domain" description="Cytoplasmic" evidence="1">
    <location>
        <begin position="209"/>
        <end position="230"/>
    </location>
</feature>
<feature type="transmembrane region" description="Helical; Name=6" evidence="1">
    <location>
        <begin position="231"/>
        <end position="255"/>
    </location>
</feature>
<feature type="topological domain" description="Extracellular" evidence="1">
    <location>
        <begin position="256"/>
        <end position="264"/>
    </location>
</feature>
<feature type="transmembrane region" description="Helical; Name=7" evidence="1">
    <location>
        <begin position="265"/>
        <end position="289"/>
    </location>
</feature>
<feature type="topological domain" description="Cytoplasmic" evidence="1">
    <location>
        <begin position="290"/>
        <end position="301"/>
    </location>
</feature>
<feature type="modified residue" description="N6-(retinylidene)lysine" evidence="3">
    <location>
        <position position="275"/>
    </location>
</feature>
<feature type="glycosylation site" description="N-linked (GlcNAc...) asparagine" evidence="1">
    <location>
        <position position="170"/>
    </location>
</feature>
<reference key="1">
    <citation type="journal article" date="1990" name="FEBS Lett.">
        <title>Cloning and nucleotide sequence of cDNA for retinochrome, retinal photoisomerase from the squid retina.</title>
        <authorList>
            <person name="Hara-Nishimura I."/>
            <person name="Matsumoto T."/>
            <person name="Mori H."/>
            <person name="Nishimura M."/>
            <person name="Hara R."/>
            <person name="Hara T."/>
        </authorList>
    </citation>
    <scope>NUCLEOTIDE SEQUENCE [MRNA]</scope>
    <source>
        <tissue>Retina</tissue>
    </source>
</reference>
<reference key="2">
    <citation type="journal article" date="1986" name="Photobiochem. Photobiophys.">
        <title>Amino-terminal sequence of squid retinochrome.</title>
        <authorList>
            <person name="Uematsu J."/>
            <person name="Hara-Nishimura I."/>
            <person name="Wada K."/>
            <person name="Matsubara H."/>
            <person name="Hara T."/>
        </authorList>
    </citation>
    <scope>PROTEIN SEQUENCE OF 1-15 AND 114-128</scope>
    <source>
        <tissue>Retina</tissue>
    </source>
</reference>
<reference key="3">
    <citation type="journal article" date="1993" name="FEBS Lett.">
        <title>Amino acid sequence surrounding the retinal-binding site in retinochrome of the squid, Todarodes pacificus.</title>
        <authorList>
            <person name="Hara-Nishimura I."/>
            <person name="Kondo M."/>
            <person name="Nishimura M."/>
            <person name="Hara R."/>
            <person name="Hara T."/>
        </authorList>
    </citation>
    <scope>PROTEIN SEQUENCE OF 274-281</scope>
    <scope>RETINAL-BINDING SITE</scope>
    <source>
        <tissue>Retina</tissue>
    </source>
</reference>
<comment type="function">
    <text>Retinochrome is capable of acting as an effective catalyst in the light to convert various isomers of retinal into 11-cis, the form that is required by opsin to resynthesize rhodopsin.</text>
</comment>
<comment type="subcellular location">
    <subcellularLocation>
        <location>Membrane</location>
        <topology>Multi-pass membrane protein</topology>
    </subcellularLocation>
</comment>
<comment type="tissue specificity">
    <text>Mainly stored in myeloid bodies of the inner segments.</text>
</comment>
<comment type="similarity">
    <text evidence="2">Belongs to the G-protein coupled receptor 1 family. Opsin subfamily.</text>
</comment>
<sequence length="301" mass="33490">MFGNPAMTGLHQFTMWEHYFTGSIYLVLGCVVFSLCGMCIIFLARQSPKPRRKYAILIHVLITAMAVNGGDPAHASSSIVGRWLYGSVGCQLMGFWGFFGGMSHIWMLFAFAMERYMAVCHREFYQQMPSVYYSIIVGLMYTFGTFWATMPLLGWASYGLEVHGTSCTINYSVSDESYQSYVFFLAIFSFIFPMVSGWYAISKAWSGLSAIPDAEKEKDKDILSEEQLTALAGAFILISLISWSGFGYVAIYSALTHGGAQLSHLRGHVPPIMSKTGCALFPLLIFLLTARSLPKSDTKKP</sequence>
<accession>P23820</accession>